<sequence>MDSNTNENNSHASSNERQSSEGHDDYLNRNPNSEATEGEEGTHPTTGTQPVAFSIGTMFIITPQANFEGGENDPFANPFQPPVKRAVKEAWDSFEPLSNDQLMDLTCPICYDDMNENDEKQATKMPCGHIFGKNCLQKWLENHCTCPLCRKEVPHETVGSAHPPILFIIPHSHTLRGNQGNTAVSQENASNGVHSDFHPSEELNNANTDGRTGVDEPARQLHRIAFNRIRFILAPNRSATNTPVENTHPENPDSNTSTPTTRSEPLAGEGASIDAENASSRQETTPSDSRPSTLTSLFNAFFSSMPDRPSSNEPMTSNLTSNSGSMTNSTSTDLPTSNLPSQNAPARPVEPSPSIQPPNLLNLPTASPESTSWLPGSQTNIPANTNRSERPFTQLMTFHGLPSLADLPAVLESMFRPSGNNNLLNLNGIFHPDHNAQTENGQTLPENTDDTNSNATSAVPNLQNLNQQNAVTMGTNTPNNGSSPAVHPVIHIYLSRPPLQPAVSEQETPSEAVSREGTRSTDATMEDSSRPPSNGSFQGPGITHLSEMGQRILQRFQEEMENRMNQTRSESSTPAQQSAAGSSINVDTAGRQPSDEINIPGEYENSSEVAGSRNQTPTHSSIAVDTLSNVAVDQPAISTPSDVVGSDAGDTSKVSSGTSTPRMAAPIARRSNRHHPYSRPSSTRPQCQLEDQGICDPNDRFVHFECGHSVHERCQQSTSNSENQMDEEIGECPKCRNEEHK</sequence>
<proteinExistence type="predicted"/>
<comment type="subcellular location">
    <subcellularLocation>
        <location evidence="3">Nucleus</location>
    </subcellularLocation>
</comment>
<name>YGI4_SCHPO</name>
<protein>
    <recommendedName>
        <fullName>Uncharacterized RING finger protein C2A9.04c</fullName>
    </recommendedName>
</protein>
<keyword id="KW-0479">Metal-binding</keyword>
<keyword id="KW-0539">Nucleus</keyword>
<keyword id="KW-1185">Reference proteome</keyword>
<keyword id="KW-0677">Repeat</keyword>
<keyword id="KW-0862">Zinc</keyword>
<keyword id="KW-0863">Zinc-finger</keyword>
<reference key="1">
    <citation type="journal article" date="2002" name="Nature">
        <title>The genome sequence of Schizosaccharomyces pombe.</title>
        <authorList>
            <person name="Wood V."/>
            <person name="Gwilliam R."/>
            <person name="Rajandream M.A."/>
            <person name="Lyne M.H."/>
            <person name="Lyne R."/>
            <person name="Stewart A."/>
            <person name="Sgouros J.G."/>
            <person name="Peat N."/>
            <person name="Hayles J."/>
            <person name="Baker S.G."/>
            <person name="Basham D."/>
            <person name="Bowman S."/>
            <person name="Brooks K."/>
            <person name="Brown D."/>
            <person name="Brown S."/>
            <person name="Chillingworth T."/>
            <person name="Churcher C.M."/>
            <person name="Collins M."/>
            <person name="Connor R."/>
            <person name="Cronin A."/>
            <person name="Davis P."/>
            <person name="Feltwell T."/>
            <person name="Fraser A."/>
            <person name="Gentles S."/>
            <person name="Goble A."/>
            <person name="Hamlin N."/>
            <person name="Harris D.E."/>
            <person name="Hidalgo J."/>
            <person name="Hodgson G."/>
            <person name="Holroyd S."/>
            <person name="Hornsby T."/>
            <person name="Howarth S."/>
            <person name="Huckle E.J."/>
            <person name="Hunt S."/>
            <person name="Jagels K."/>
            <person name="James K.D."/>
            <person name="Jones L."/>
            <person name="Jones M."/>
            <person name="Leather S."/>
            <person name="McDonald S."/>
            <person name="McLean J."/>
            <person name="Mooney P."/>
            <person name="Moule S."/>
            <person name="Mungall K.L."/>
            <person name="Murphy L.D."/>
            <person name="Niblett D."/>
            <person name="Odell C."/>
            <person name="Oliver K."/>
            <person name="O'Neil S."/>
            <person name="Pearson D."/>
            <person name="Quail M.A."/>
            <person name="Rabbinowitsch E."/>
            <person name="Rutherford K.M."/>
            <person name="Rutter S."/>
            <person name="Saunders D."/>
            <person name="Seeger K."/>
            <person name="Sharp S."/>
            <person name="Skelton J."/>
            <person name="Simmonds M.N."/>
            <person name="Squares R."/>
            <person name="Squares S."/>
            <person name="Stevens K."/>
            <person name="Taylor K."/>
            <person name="Taylor R.G."/>
            <person name="Tivey A."/>
            <person name="Walsh S.V."/>
            <person name="Warren T."/>
            <person name="Whitehead S."/>
            <person name="Woodward J.R."/>
            <person name="Volckaert G."/>
            <person name="Aert R."/>
            <person name="Robben J."/>
            <person name="Grymonprez B."/>
            <person name="Weltjens I."/>
            <person name="Vanstreels E."/>
            <person name="Rieger M."/>
            <person name="Schaefer M."/>
            <person name="Mueller-Auer S."/>
            <person name="Gabel C."/>
            <person name="Fuchs M."/>
            <person name="Duesterhoeft A."/>
            <person name="Fritzc C."/>
            <person name="Holzer E."/>
            <person name="Moestl D."/>
            <person name="Hilbert H."/>
            <person name="Borzym K."/>
            <person name="Langer I."/>
            <person name="Beck A."/>
            <person name="Lehrach H."/>
            <person name="Reinhardt R."/>
            <person name="Pohl T.M."/>
            <person name="Eger P."/>
            <person name="Zimmermann W."/>
            <person name="Wedler H."/>
            <person name="Wambutt R."/>
            <person name="Purnelle B."/>
            <person name="Goffeau A."/>
            <person name="Cadieu E."/>
            <person name="Dreano S."/>
            <person name="Gloux S."/>
            <person name="Lelaure V."/>
            <person name="Mottier S."/>
            <person name="Galibert F."/>
            <person name="Aves S.J."/>
            <person name="Xiang Z."/>
            <person name="Hunt C."/>
            <person name="Moore K."/>
            <person name="Hurst S.M."/>
            <person name="Lucas M."/>
            <person name="Rochet M."/>
            <person name="Gaillardin C."/>
            <person name="Tallada V.A."/>
            <person name="Garzon A."/>
            <person name="Thode G."/>
            <person name="Daga R.R."/>
            <person name="Cruzado L."/>
            <person name="Jimenez J."/>
            <person name="Sanchez M."/>
            <person name="del Rey F."/>
            <person name="Benito J."/>
            <person name="Dominguez A."/>
            <person name="Revuelta J.L."/>
            <person name="Moreno S."/>
            <person name="Armstrong J."/>
            <person name="Forsburg S.L."/>
            <person name="Cerutti L."/>
            <person name="Lowe T."/>
            <person name="McCombie W.R."/>
            <person name="Paulsen I."/>
            <person name="Potashkin J."/>
            <person name="Shpakovski G.V."/>
            <person name="Ussery D."/>
            <person name="Barrell B.G."/>
            <person name="Nurse P."/>
        </authorList>
    </citation>
    <scope>NUCLEOTIDE SEQUENCE [LARGE SCALE GENOMIC DNA]</scope>
    <source>
        <strain>972 / ATCC 24843</strain>
    </source>
</reference>
<reference key="2">
    <citation type="journal article" date="2006" name="Nat. Biotechnol.">
        <title>ORFeome cloning and global analysis of protein localization in the fission yeast Schizosaccharomyces pombe.</title>
        <authorList>
            <person name="Matsuyama A."/>
            <person name="Arai R."/>
            <person name="Yashiroda Y."/>
            <person name="Shirai A."/>
            <person name="Kamata A."/>
            <person name="Sekido S."/>
            <person name="Kobayashi Y."/>
            <person name="Hashimoto A."/>
            <person name="Hamamoto M."/>
            <person name="Hiraoka Y."/>
            <person name="Horinouchi S."/>
            <person name="Yoshida M."/>
        </authorList>
    </citation>
    <scope>SUBCELLULAR LOCATION [LARGE SCALE ANALYSIS]</scope>
</reference>
<feature type="chain" id="PRO_0000310484" description="Uncharacterized RING finger protein C2A9.04c">
    <location>
        <begin position="1"/>
        <end position="741"/>
    </location>
</feature>
<feature type="zinc finger region" description="RING-type 1; degenerate" evidence="1">
    <location>
        <begin position="107"/>
        <end position="150"/>
    </location>
</feature>
<feature type="zinc finger region" description="RING-type 2; degenerate" evidence="1">
    <location>
        <begin position="687"/>
        <end position="736"/>
    </location>
</feature>
<feature type="region of interest" description="Disordered" evidence="2">
    <location>
        <begin position="1"/>
        <end position="50"/>
    </location>
</feature>
<feature type="region of interest" description="Disordered" evidence="2">
    <location>
        <begin position="177"/>
        <end position="214"/>
    </location>
</feature>
<feature type="region of interest" description="Disordered" evidence="2">
    <location>
        <begin position="238"/>
        <end position="387"/>
    </location>
</feature>
<feature type="region of interest" description="Disordered" evidence="2">
    <location>
        <begin position="500"/>
        <end position="543"/>
    </location>
</feature>
<feature type="region of interest" description="Disordered" evidence="2">
    <location>
        <begin position="561"/>
        <end position="619"/>
    </location>
</feature>
<feature type="region of interest" description="Disordered" evidence="2">
    <location>
        <begin position="638"/>
        <end position="688"/>
    </location>
</feature>
<feature type="region of interest" description="Disordered" evidence="2">
    <location>
        <begin position="713"/>
        <end position="741"/>
    </location>
</feature>
<feature type="compositionally biased region" description="Polar residues" evidence="2">
    <location>
        <begin position="1"/>
        <end position="17"/>
    </location>
</feature>
<feature type="compositionally biased region" description="Basic and acidic residues" evidence="2">
    <location>
        <begin position="18"/>
        <end position="27"/>
    </location>
</feature>
<feature type="compositionally biased region" description="Polar residues" evidence="2">
    <location>
        <begin position="177"/>
        <end position="193"/>
    </location>
</feature>
<feature type="compositionally biased region" description="Polar residues" evidence="2">
    <location>
        <begin position="252"/>
        <end position="263"/>
    </location>
</feature>
<feature type="compositionally biased region" description="Polar residues" evidence="2">
    <location>
        <begin position="277"/>
        <end position="302"/>
    </location>
</feature>
<feature type="compositionally biased region" description="Low complexity" evidence="2">
    <location>
        <begin position="316"/>
        <end position="332"/>
    </location>
</feature>
<feature type="compositionally biased region" description="Polar residues" evidence="2">
    <location>
        <begin position="333"/>
        <end position="344"/>
    </location>
</feature>
<feature type="compositionally biased region" description="Polar residues" evidence="2">
    <location>
        <begin position="357"/>
        <end position="386"/>
    </location>
</feature>
<feature type="compositionally biased region" description="Polar residues" evidence="2">
    <location>
        <begin position="563"/>
        <end position="586"/>
    </location>
</feature>
<feature type="compositionally biased region" description="Polar residues" evidence="2">
    <location>
        <begin position="604"/>
        <end position="619"/>
    </location>
</feature>
<feature type="compositionally biased region" description="Polar residues" evidence="2">
    <location>
        <begin position="652"/>
        <end position="661"/>
    </location>
</feature>
<feature type="compositionally biased region" description="Basic and acidic residues" evidence="2">
    <location>
        <begin position="731"/>
        <end position="741"/>
    </location>
</feature>
<organism>
    <name type="scientific">Schizosaccharomyces pombe (strain 972 / ATCC 24843)</name>
    <name type="common">Fission yeast</name>
    <dbReference type="NCBI Taxonomy" id="284812"/>
    <lineage>
        <taxon>Eukaryota</taxon>
        <taxon>Fungi</taxon>
        <taxon>Dikarya</taxon>
        <taxon>Ascomycota</taxon>
        <taxon>Taphrinomycotina</taxon>
        <taxon>Schizosaccharomycetes</taxon>
        <taxon>Schizosaccharomycetales</taxon>
        <taxon>Schizosaccharomycetaceae</taxon>
        <taxon>Schizosaccharomyces</taxon>
    </lineage>
</organism>
<dbReference type="EMBL" id="CU329671">
    <property type="protein sequence ID" value="CAB39846.1"/>
    <property type="molecule type" value="Genomic_DNA"/>
</dbReference>
<dbReference type="PIR" id="T40095">
    <property type="entry name" value="T40095"/>
</dbReference>
<dbReference type="SMR" id="Q9Y7K6"/>
<dbReference type="BioGRID" id="277008">
    <property type="interactions" value="27"/>
</dbReference>
<dbReference type="STRING" id="284812.Q9Y7K6"/>
<dbReference type="iPTMnet" id="Q9Y7K6"/>
<dbReference type="PaxDb" id="4896-SPBC2A9.04c.1"/>
<dbReference type="EnsemblFungi" id="SPBC2A9.04c.1">
    <property type="protein sequence ID" value="SPBC2A9.04c.1:pep"/>
    <property type="gene ID" value="SPBC2A9.04c"/>
</dbReference>
<dbReference type="KEGG" id="spo:2540480"/>
<dbReference type="PomBase" id="SPBC2A9.04c"/>
<dbReference type="VEuPathDB" id="FungiDB:SPBC2A9.04c"/>
<dbReference type="eggNOG" id="KOG0800">
    <property type="taxonomic scope" value="Eukaryota"/>
</dbReference>
<dbReference type="HOGENOM" id="CLU_346177_0_0_1"/>
<dbReference type="InParanoid" id="Q9Y7K6"/>
<dbReference type="OMA" id="RKEVPHE"/>
<dbReference type="PhylomeDB" id="Q9Y7K6"/>
<dbReference type="PRO" id="PR:Q9Y7K6"/>
<dbReference type="Proteomes" id="UP000002485">
    <property type="component" value="Chromosome II"/>
</dbReference>
<dbReference type="GO" id="GO:0044695">
    <property type="term" value="C:Dsc E3 ubiquitin ligase complex"/>
    <property type="evidence" value="ECO:0000318"/>
    <property type="project" value="GO_Central"/>
</dbReference>
<dbReference type="GO" id="GO:0012505">
    <property type="term" value="C:endomembrane system"/>
    <property type="evidence" value="ECO:0000318"/>
    <property type="project" value="GO_Central"/>
</dbReference>
<dbReference type="GO" id="GO:0005634">
    <property type="term" value="C:nucleus"/>
    <property type="evidence" value="ECO:0000314"/>
    <property type="project" value="PomBase"/>
</dbReference>
<dbReference type="GO" id="GO:0061630">
    <property type="term" value="F:ubiquitin protein ligase activity"/>
    <property type="evidence" value="ECO:0000315"/>
    <property type="project" value="PomBase"/>
</dbReference>
<dbReference type="GO" id="GO:0008270">
    <property type="term" value="F:zinc ion binding"/>
    <property type="evidence" value="ECO:0000255"/>
    <property type="project" value="PomBase"/>
</dbReference>
<dbReference type="GO" id="GO:0071629">
    <property type="term" value="P:cytoplasm protein quality control by the ubiquitin-proteasome system"/>
    <property type="evidence" value="ECO:0000315"/>
    <property type="project" value="PomBase"/>
</dbReference>
<dbReference type="GO" id="GO:0043161">
    <property type="term" value="P:proteasome-mediated ubiquitin-dependent protein catabolic process"/>
    <property type="evidence" value="ECO:0000318"/>
    <property type="project" value="GO_Central"/>
</dbReference>
<dbReference type="GO" id="GO:0006511">
    <property type="term" value="P:ubiquitin-dependent protein catabolic process"/>
    <property type="evidence" value="ECO:0000315"/>
    <property type="project" value="PomBase"/>
</dbReference>
<dbReference type="Gene3D" id="3.30.40.10">
    <property type="entry name" value="Zinc/RING finger domain, C3HC4 (zinc finger)"/>
    <property type="match status" value="1"/>
</dbReference>
<dbReference type="InterPro" id="IPR001841">
    <property type="entry name" value="Znf_RING"/>
</dbReference>
<dbReference type="InterPro" id="IPR013083">
    <property type="entry name" value="Znf_RING/FYVE/PHD"/>
</dbReference>
<dbReference type="PANTHER" id="PTHR45969:SF69">
    <property type="entry name" value="FINGER DOMAIN PROTEIN, PUTATIVE (AFU_ORTHOLOGUE AFUA_3G12190)-RELATED"/>
    <property type="match status" value="1"/>
</dbReference>
<dbReference type="PANTHER" id="PTHR45969">
    <property type="entry name" value="RING ZINC FINGER PROTEIN-RELATED"/>
    <property type="match status" value="1"/>
</dbReference>
<dbReference type="Pfam" id="PF13639">
    <property type="entry name" value="zf-RING_2"/>
    <property type="match status" value="1"/>
</dbReference>
<dbReference type="SMART" id="SM00184">
    <property type="entry name" value="RING"/>
    <property type="match status" value="2"/>
</dbReference>
<dbReference type="SUPFAM" id="SSF57850">
    <property type="entry name" value="RING/U-box"/>
    <property type="match status" value="1"/>
</dbReference>
<dbReference type="PROSITE" id="PS50089">
    <property type="entry name" value="ZF_RING_2"/>
    <property type="match status" value="1"/>
</dbReference>
<accession>Q9Y7K6</accession>
<gene>
    <name type="ORF">SPBC2A9.04c</name>
</gene>
<evidence type="ECO:0000255" key="1">
    <source>
        <dbReference type="PROSITE-ProRule" id="PRU00175"/>
    </source>
</evidence>
<evidence type="ECO:0000256" key="2">
    <source>
        <dbReference type="SAM" id="MobiDB-lite"/>
    </source>
</evidence>
<evidence type="ECO:0000269" key="3">
    <source>
    </source>
</evidence>